<feature type="chain" id="PRO_0000260975" description="Large ribosomal subunit protein uL6">
    <location>
        <begin position="1"/>
        <end position="175"/>
    </location>
</feature>
<keyword id="KW-1185">Reference proteome</keyword>
<keyword id="KW-0687">Ribonucleoprotein</keyword>
<keyword id="KW-0689">Ribosomal protein</keyword>
<keyword id="KW-0694">RNA-binding</keyword>
<keyword id="KW-0699">rRNA-binding</keyword>
<comment type="function">
    <text evidence="1">This protein binds to the 23S rRNA, and is important in its secondary structure. It is located near the subunit interface in the base of the L7/L12 stalk, and near the tRNA binding site of the peptidyltransferase center.</text>
</comment>
<comment type="subunit">
    <text evidence="1">Part of the 50S ribosomal subunit.</text>
</comment>
<comment type="similarity">
    <text evidence="1">Belongs to the universal ribosomal protein uL6 family.</text>
</comment>
<proteinExistence type="inferred from homology"/>
<gene>
    <name evidence="1" type="primary">rplF</name>
    <name type="ordered locus">XCC0910</name>
</gene>
<accession>Q8PC37</accession>
<sequence>MSRVAKKPVSLPKGVELNVQPELISVKGPKGTLTLQKPVGVEIAIDGDVATLSANDPSQIAITGTVRAILANMIKGVSEGFERKLELVGVGYRAAMQGKDLSLALGFSHPLVFVAPEGITLSTPTQTEILVQGADKQRVGEVAAKIRGFRPPEPYKGKGVKYAGEVIIRKEAKKA</sequence>
<reference key="1">
    <citation type="journal article" date="2002" name="Nature">
        <title>Comparison of the genomes of two Xanthomonas pathogens with differing host specificities.</title>
        <authorList>
            <person name="da Silva A.C.R."/>
            <person name="Ferro J.A."/>
            <person name="Reinach F.C."/>
            <person name="Farah C.S."/>
            <person name="Furlan L.R."/>
            <person name="Quaggio R.B."/>
            <person name="Monteiro-Vitorello C.B."/>
            <person name="Van Sluys M.A."/>
            <person name="Almeida N.F. Jr."/>
            <person name="Alves L.M.C."/>
            <person name="do Amaral A.M."/>
            <person name="Bertolini M.C."/>
            <person name="Camargo L.E.A."/>
            <person name="Camarotte G."/>
            <person name="Cannavan F."/>
            <person name="Cardozo J."/>
            <person name="Chambergo F."/>
            <person name="Ciapina L.P."/>
            <person name="Cicarelli R.M.B."/>
            <person name="Coutinho L.L."/>
            <person name="Cursino-Santos J.R."/>
            <person name="El-Dorry H."/>
            <person name="Faria J.B."/>
            <person name="Ferreira A.J.S."/>
            <person name="Ferreira R.C.C."/>
            <person name="Ferro M.I.T."/>
            <person name="Formighieri E.F."/>
            <person name="Franco M.C."/>
            <person name="Greggio C.C."/>
            <person name="Gruber A."/>
            <person name="Katsuyama A.M."/>
            <person name="Kishi L.T."/>
            <person name="Leite R.P."/>
            <person name="Lemos E.G.M."/>
            <person name="Lemos M.V.F."/>
            <person name="Locali E.C."/>
            <person name="Machado M.A."/>
            <person name="Madeira A.M.B.N."/>
            <person name="Martinez-Rossi N.M."/>
            <person name="Martins E.C."/>
            <person name="Meidanis J."/>
            <person name="Menck C.F.M."/>
            <person name="Miyaki C.Y."/>
            <person name="Moon D.H."/>
            <person name="Moreira L.M."/>
            <person name="Novo M.T.M."/>
            <person name="Okura V.K."/>
            <person name="Oliveira M.C."/>
            <person name="Oliveira V.R."/>
            <person name="Pereira H.A."/>
            <person name="Rossi A."/>
            <person name="Sena J.A.D."/>
            <person name="Silva C."/>
            <person name="de Souza R.F."/>
            <person name="Spinola L.A.F."/>
            <person name="Takita M.A."/>
            <person name="Tamura R.E."/>
            <person name="Teixeira E.C."/>
            <person name="Tezza R.I.D."/>
            <person name="Trindade dos Santos M."/>
            <person name="Truffi D."/>
            <person name="Tsai S.M."/>
            <person name="White F.F."/>
            <person name="Setubal J.C."/>
            <person name="Kitajima J.P."/>
        </authorList>
    </citation>
    <scope>NUCLEOTIDE SEQUENCE [LARGE SCALE GENOMIC DNA]</scope>
    <source>
        <strain>ATCC 33913 / DSM 3586 / NCPPB 528 / LMG 568 / P 25</strain>
    </source>
</reference>
<name>RL6_XANCP</name>
<evidence type="ECO:0000255" key="1">
    <source>
        <dbReference type="HAMAP-Rule" id="MF_01365"/>
    </source>
</evidence>
<evidence type="ECO:0000305" key="2"/>
<organism>
    <name type="scientific">Xanthomonas campestris pv. campestris (strain ATCC 33913 / DSM 3586 / NCPPB 528 / LMG 568 / P 25)</name>
    <dbReference type="NCBI Taxonomy" id="190485"/>
    <lineage>
        <taxon>Bacteria</taxon>
        <taxon>Pseudomonadati</taxon>
        <taxon>Pseudomonadota</taxon>
        <taxon>Gammaproteobacteria</taxon>
        <taxon>Lysobacterales</taxon>
        <taxon>Lysobacteraceae</taxon>
        <taxon>Xanthomonas</taxon>
    </lineage>
</organism>
<dbReference type="EMBL" id="AE008922">
    <property type="protein sequence ID" value="AAM40220.1"/>
    <property type="molecule type" value="Genomic_DNA"/>
</dbReference>
<dbReference type="RefSeq" id="NP_636296.1">
    <property type="nucleotide sequence ID" value="NC_003902.1"/>
</dbReference>
<dbReference type="RefSeq" id="WP_011036130.1">
    <property type="nucleotide sequence ID" value="NC_003902.1"/>
</dbReference>
<dbReference type="SMR" id="Q8PC37"/>
<dbReference type="STRING" id="190485.XCC0910"/>
<dbReference type="EnsemblBacteria" id="AAM40220">
    <property type="protein sequence ID" value="AAM40220"/>
    <property type="gene ID" value="XCC0910"/>
</dbReference>
<dbReference type="KEGG" id="xcc:XCC0910"/>
<dbReference type="PATRIC" id="fig|190485.4.peg.982"/>
<dbReference type="eggNOG" id="COG0097">
    <property type="taxonomic scope" value="Bacteria"/>
</dbReference>
<dbReference type="HOGENOM" id="CLU_065464_1_2_6"/>
<dbReference type="OrthoDB" id="9805007at2"/>
<dbReference type="Proteomes" id="UP000001010">
    <property type="component" value="Chromosome"/>
</dbReference>
<dbReference type="GO" id="GO:0022625">
    <property type="term" value="C:cytosolic large ribosomal subunit"/>
    <property type="evidence" value="ECO:0000318"/>
    <property type="project" value="GO_Central"/>
</dbReference>
<dbReference type="GO" id="GO:0019843">
    <property type="term" value="F:rRNA binding"/>
    <property type="evidence" value="ECO:0007669"/>
    <property type="project" value="UniProtKB-UniRule"/>
</dbReference>
<dbReference type="GO" id="GO:0003735">
    <property type="term" value="F:structural constituent of ribosome"/>
    <property type="evidence" value="ECO:0000318"/>
    <property type="project" value="GO_Central"/>
</dbReference>
<dbReference type="GO" id="GO:0002181">
    <property type="term" value="P:cytoplasmic translation"/>
    <property type="evidence" value="ECO:0000318"/>
    <property type="project" value="GO_Central"/>
</dbReference>
<dbReference type="FunFam" id="3.90.930.12:FF:000001">
    <property type="entry name" value="50S ribosomal protein L6"/>
    <property type="match status" value="1"/>
</dbReference>
<dbReference type="Gene3D" id="3.90.930.12">
    <property type="entry name" value="Ribosomal protein L6, alpha-beta domain"/>
    <property type="match status" value="2"/>
</dbReference>
<dbReference type="HAMAP" id="MF_01365_B">
    <property type="entry name" value="Ribosomal_uL6_B"/>
    <property type="match status" value="1"/>
</dbReference>
<dbReference type="InterPro" id="IPR000702">
    <property type="entry name" value="Ribosomal_uL6-like"/>
</dbReference>
<dbReference type="InterPro" id="IPR036789">
    <property type="entry name" value="Ribosomal_uL6-like_a/b-dom_sf"/>
</dbReference>
<dbReference type="InterPro" id="IPR020040">
    <property type="entry name" value="Ribosomal_uL6_a/b-dom"/>
</dbReference>
<dbReference type="InterPro" id="IPR019906">
    <property type="entry name" value="Ribosomal_uL6_bac-type"/>
</dbReference>
<dbReference type="InterPro" id="IPR002358">
    <property type="entry name" value="Ribosomal_uL6_CS"/>
</dbReference>
<dbReference type="NCBIfam" id="TIGR03654">
    <property type="entry name" value="L6_bact"/>
    <property type="match status" value="1"/>
</dbReference>
<dbReference type="PANTHER" id="PTHR11655">
    <property type="entry name" value="60S/50S RIBOSOMAL PROTEIN L6/L9"/>
    <property type="match status" value="1"/>
</dbReference>
<dbReference type="PANTHER" id="PTHR11655:SF14">
    <property type="entry name" value="LARGE RIBOSOMAL SUBUNIT PROTEIN UL6M"/>
    <property type="match status" value="1"/>
</dbReference>
<dbReference type="Pfam" id="PF00347">
    <property type="entry name" value="Ribosomal_L6"/>
    <property type="match status" value="2"/>
</dbReference>
<dbReference type="PIRSF" id="PIRSF002162">
    <property type="entry name" value="Ribosomal_L6"/>
    <property type="match status" value="1"/>
</dbReference>
<dbReference type="PRINTS" id="PR00059">
    <property type="entry name" value="RIBOSOMALL6"/>
</dbReference>
<dbReference type="SUPFAM" id="SSF56053">
    <property type="entry name" value="Ribosomal protein L6"/>
    <property type="match status" value="2"/>
</dbReference>
<dbReference type="PROSITE" id="PS00525">
    <property type="entry name" value="RIBOSOMAL_L6_1"/>
    <property type="match status" value="1"/>
</dbReference>
<protein>
    <recommendedName>
        <fullName evidence="1">Large ribosomal subunit protein uL6</fullName>
    </recommendedName>
    <alternativeName>
        <fullName evidence="2">50S ribosomal protein L6</fullName>
    </alternativeName>
</protein>